<reference key="1">
    <citation type="submission" date="1997-03" db="EMBL/GenBank/DDBJ databases">
        <title>A 148 kbp sequence of the region between 35 and 47 degree of the Bacillus subtilis genome.</title>
        <authorList>
            <person name="Kasahara Y."/>
            <person name="Nakai S."/>
            <person name="Lee S."/>
            <person name="Sadaie Y."/>
            <person name="Ogasawara N."/>
        </authorList>
    </citation>
    <scope>NUCLEOTIDE SEQUENCE [GENOMIC DNA]</scope>
    <source>
        <strain>168</strain>
    </source>
</reference>
<reference key="2">
    <citation type="journal article" date="1997" name="Nature">
        <title>The complete genome sequence of the Gram-positive bacterium Bacillus subtilis.</title>
        <authorList>
            <person name="Kunst F."/>
            <person name="Ogasawara N."/>
            <person name="Moszer I."/>
            <person name="Albertini A.M."/>
            <person name="Alloni G."/>
            <person name="Azevedo V."/>
            <person name="Bertero M.G."/>
            <person name="Bessieres P."/>
            <person name="Bolotin A."/>
            <person name="Borchert S."/>
            <person name="Borriss R."/>
            <person name="Boursier L."/>
            <person name="Brans A."/>
            <person name="Braun M."/>
            <person name="Brignell S.C."/>
            <person name="Bron S."/>
            <person name="Brouillet S."/>
            <person name="Bruschi C.V."/>
            <person name="Caldwell B."/>
            <person name="Capuano V."/>
            <person name="Carter N.M."/>
            <person name="Choi S.-K."/>
            <person name="Codani J.-J."/>
            <person name="Connerton I.F."/>
            <person name="Cummings N.J."/>
            <person name="Daniel R.A."/>
            <person name="Denizot F."/>
            <person name="Devine K.M."/>
            <person name="Duesterhoeft A."/>
            <person name="Ehrlich S.D."/>
            <person name="Emmerson P.T."/>
            <person name="Entian K.-D."/>
            <person name="Errington J."/>
            <person name="Fabret C."/>
            <person name="Ferrari E."/>
            <person name="Foulger D."/>
            <person name="Fritz C."/>
            <person name="Fujita M."/>
            <person name="Fujita Y."/>
            <person name="Fuma S."/>
            <person name="Galizzi A."/>
            <person name="Galleron N."/>
            <person name="Ghim S.-Y."/>
            <person name="Glaser P."/>
            <person name="Goffeau A."/>
            <person name="Golightly E.J."/>
            <person name="Grandi G."/>
            <person name="Guiseppi G."/>
            <person name="Guy B.J."/>
            <person name="Haga K."/>
            <person name="Haiech J."/>
            <person name="Harwood C.R."/>
            <person name="Henaut A."/>
            <person name="Hilbert H."/>
            <person name="Holsappel S."/>
            <person name="Hosono S."/>
            <person name="Hullo M.-F."/>
            <person name="Itaya M."/>
            <person name="Jones L.-M."/>
            <person name="Joris B."/>
            <person name="Karamata D."/>
            <person name="Kasahara Y."/>
            <person name="Klaerr-Blanchard M."/>
            <person name="Klein C."/>
            <person name="Kobayashi Y."/>
            <person name="Koetter P."/>
            <person name="Koningstein G."/>
            <person name="Krogh S."/>
            <person name="Kumano M."/>
            <person name="Kurita K."/>
            <person name="Lapidus A."/>
            <person name="Lardinois S."/>
            <person name="Lauber J."/>
            <person name="Lazarevic V."/>
            <person name="Lee S.-M."/>
            <person name="Levine A."/>
            <person name="Liu H."/>
            <person name="Masuda S."/>
            <person name="Mauel C."/>
            <person name="Medigue C."/>
            <person name="Medina N."/>
            <person name="Mellado R.P."/>
            <person name="Mizuno M."/>
            <person name="Moestl D."/>
            <person name="Nakai S."/>
            <person name="Noback M."/>
            <person name="Noone D."/>
            <person name="O'Reilly M."/>
            <person name="Ogawa K."/>
            <person name="Ogiwara A."/>
            <person name="Oudega B."/>
            <person name="Park S.-H."/>
            <person name="Parro V."/>
            <person name="Pohl T.M."/>
            <person name="Portetelle D."/>
            <person name="Porwollik S."/>
            <person name="Prescott A.M."/>
            <person name="Presecan E."/>
            <person name="Pujic P."/>
            <person name="Purnelle B."/>
            <person name="Rapoport G."/>
            <person name="Rey M."/>
            <person name="Reynolds S."/>
            <person name="Rieger M."/>
            <person name="Rivolta C."/>
            <person name="Rocha E."/>
            <person name="Roche B."/>
            <person name="Rose M."/>
            <person name="Sadaie Y."/>
            <person name="Sato T."/>
            <person name="Scanlan E."/>
            <person name="Schleich S."/>
            <person name="Schroeter R."/>
            <person name="Scoffone F."/>
            <person name="Sekiguchi J."/>
            <person name="Sekowska A."/>
            <person name="Seror S.J."/>
            <person name="Serror P."/>
            <person name="Shin B.-S."/>
            <person name="Soldo B."/>
            <person name="Sorokin A."/>
            <person name="Tacconi E."/>
            <person name="Takagi T."/>
            <person name="Takahashi H."/>
            <person name="Takemaru K."/>
            <person name="Takeuchi M."/>
            <person name="Tamakoshi A."/>
            <person name="Tanaka T."/>
            <person name="Terpstra P."/>
            <person name="Tognoni A."/>
            <person name="Tosato V."/>
            <person name="Uchiyama S."/>
            <person name="Vandenbol M."/>
            <person name="Vannier F."/>
            <person name="Vassarotti A."/>
            <person name="Viari A."/>
            <person name="Wambutt R."/>
            <person name="Wedler E."/>
            <person name="Wedler H."/>
            <person name="Weitzenegger T."/>
            <person name="Winters P."/>
            <person name="Wipat A."/>
            <person name="Yamamoto H."/>
            <person name="Yamane K."/>
            <person name="Yasumoto K."/>
            <person name="Yata K."/>
            <person name="Yoshida K."/>
            <person name="Yoshikawa H.-F."/>
            <person name="Zumstein E."/>
            <person name="Yoshikawa H."/>
            <person name="Danchin A."/>
        </authorList>
    </citation>
    <scope>NUCLEOTIDE SEQUENCE [LARGE SCALE GENOMIC DNA]</scope>
    <source>
        <strain>168</strain>
    </source>
</reference>
<name>YDCG_BACSU</name>
<feature type="chain" id="PRO_0000059629" description="UPF0310 protein YdcG">
    <location>
        <begin position="1"/>
        <end position="146"/>
    </location>
</feature>
<accession>P96624</accession>
<dbReference type="EMBL" id="AB001488">
    <property type="protein sequence ID" value="BAA19313.1"/>
    <property type="molecule type" value="Genomic_DNA"/>
</dbReference>
<dbReference type="EMBL" id="AL009126">
    <property type="protein sequence ID" value="CAB12283.1"/>
    <property type="molecule type" value="Genomic_DNA"/>
</dbReference>
<dbReference type="PIR" id="E69773">
    <property type="entry name" value="E69773"/>
</dbReference>
<dbReference type="RefSeq" id="NP_388357.1">
    <property type="nucleotide sequence ID" value="NC_000964.3"/>
</dbReference>
<dbReference type="RefSeq" id="WP_003246529.1">
    <property type="nucleotide sequence ID" value="NZ_OZ025638.1"/>
</dbReference>
<dbReference type="SMR" id="P96624"/>
<dbReference type="FunCoup" id="P96624">
    <property type="interactions" value="4"/>
</dbReference>
<dbReference type="STRING" id="224308.BSU04760"/>
<dbReference type="PaxDb" id="224308-BSU04760"/>
<dbReference type="EnsemblBacteria" id="CAB12283">
    <property type="protein sequence ID" value="CAB12283"/>
    <property type="gene ID" value="BSU_04760"/>
</dbReference>
<dbReference type="GeneID" id="938162"/>
<dbReference type="KEGG" id="bsu:BSU04760"/>
<dbReference type="PATRIC" id="fig|224308.179.peg.505"/>
<dbReference type="eggNOG" id="COG1673">
    <property type="taxonomic scope" value="Bacteria"/>
</dbReference>
<dbReference type="InParanoid" id="P96624"/>
<dbReference type="OrthoDB" id="9793567at2"/>
<dbReference type="BioCyc" id="BSUB:BSU04760-MONOMER"/>
<dbReference type="Proteomes" id="UP000001570">
    <property type="component" value="Chromosome"/>
</dbReference>
<dbReference type="CDD" id="cd21132">
    <property type="entry name" value="EVE-like"/>
    <property type="match status" value="1"/>
</dbReference>
<dbReference type="Gene3D" id="3.10.590.10">
    <property type="entry name" value="ph1033 like domains"/>
    <property type="match status" value="1"/>
</dbReference>
<dbReference type="HAMAP" id="MF_00771">
    <property type="entry name" value="UPF0310"/>
    <property type="match status" value="1"/>
</dbReference>
<dbReference type="InterPro" id="IPR002740">
    <property type="entry name" value="EVE_domain"/>
</dbReference>
<dbReference type="InterPro" id="IPR015947">
    <property type="entry name" value="PUA-like_sf"/>
</dbReference>
<dbReference type="InterPro" id="IPR022996">
    <property type="entry name" value="UPF0310"/>
</dbReference>
<dbReference type="NCBIfam" id="NF002616">
    <property type="entry name" value="PRK02268.1-2"/>
    <property type="match status" value="1"/>
</dbReference>
<dbReference type="Pfam" id="PF01878">
    <property type="entry name" value="EVE"/>
    <property type="match status" value="1"/>
</dbReference>
<dbReference type="SUPFAM" id="SSF88697">
    <property type="entry name" value="PUA domain-like"/>
    <property type="match status" value="1"/>
</dbReference>
<sequence>MNTNYWIGVVSEQHVLKGAAGGFAQLCHGKKAPLAKMKEGDWLIYYSPRDAYPDGKLLRSFTAIGKVKSGNIYPYQMAPNFIPYRLDIDYYPCHKIGFYDIKSKLEFVQETKHLGFLFRRGHFEISKKDFLTIAQAMGVNISGMAL</sequence>
<organism>
    <name type="scientific">Bacillus subtilis (strain 168)</name>
    <dbReference type="NCBI Taxonomy" id="224308"/>
    <lineage>
        <taxon>Bacteria</taxon>
        <taxon>Bacillati</taxon>
        <taxon>Bacillota</taxon>
        <taxon>Bacilli</taxon>
        <taxon>Bacillales</taxon>
        <taxon>Bacillaceae</taxon>
        <taxon>Bacillus</taxon>
    </lineage>
</organism>
<evidence type="ECO:0000255" key="1">
    <source>
        <dbReference type="HAMAP-Rule" id="MF_00771"/>
    </source>
</evidence>
<comment type="similarity">
    <text evidence="1">Belongs to the UPF0310 family.</text>
</comment>
<keyword id="KW-1185">Reference proteome</keyword>
<gene>
    <name type="primary">ydcG</name>
    <name type="ordered locus">BSU04760</name>
</gene>
<proteinExistence type="inferred from homology"/>
<protein>
    <recommendedName>
        <fullName evidence="1">UPF0310 protein YdcG</fullName>
    </recommendedName>
</protein>